<comment type="function">
    <text evidence="1">Core subunit of the mitochondrial membrane respiratory chain NADH dehydrogenase (Complex I) that is believed to belong to the minimal assembly required for catalysis. Complex I functions in the transfer of electrons from NADH to the respiratory chain. The immediate electron acceptor for the enzyme is believed to be ubiquinone (By similarity).</text>
</comment>
<comment type="catalytic activity">
    <reaction>
        <text>a ubiquinone + NADH + 5 H(+)(in) = a ubiquinol + NAD(+) + 4 H(+)(out)</text>
        <dbReference type="Rhea" id="RHEA:29091"/>
        <dbReference type="Rhea" id="RHEA-COMP:9565"/>
        <dbReference type="Rhea" id="RHEA-COMP:9566"/>
        <dbReference type="ChEBI" id="CHEBI:15378"/>
        <dbReference type="ChEBI" id="CHEBI:16389"/>
        <dbReference type="ChEBI" id="CHEBI:17976"/>
        <dbReference type="ChEBI" id="CHEBI:57540"/>
        <dbReference type="ChEBI" id="CHEBI:57945"/>
        <dbReference type="EC" id="7.1.1.2"/>
    </reaction>
</comment>
<comment type="subcellular location">
    <subcellularLocation>
        <location evidence="1">Mitochondrion membrane</location>
        <topology evidence="1">Multi-pass membrane protein</topology>
    </subcellularLocation>
</comment>
<comment type="similarity">
    <text evidence="3">Belongs to the complex I subunit 3 family.</text>
</comment>
<reference key="1">
    <citation type="journal article" date="2008" name="FEMS Yeast Res.">
        <title>Promiscuous DNA in the nuclear genomes of hemiascomycetous yeasts.</title>
        <authorList>
            <person name="Sacerdot C."/>
            <person name="Casaregola S."/>
            <person name="Lafontaine I."/>
            <person name="Tekaia F."/>
            <person name="Dujon B."/>
            <person name="Ozier-Kalogeropoulos O."/>
        </authorList>
    </citation>
    <scope>NUCLEOTIDE SEQUENCE [LARGE SCALE GENOMIC DNA]</scope>
    <source>
        <strain>ATCC 36239 / CBS 767 / BCRC 21394 / JCM 1990 / NBRC 0083 / IGC 2968</strain>
    </source>
</reference>
<protein>
    <recommendedName>
        <fullName>NADH-ubiquinone oxidoreductase chain 3</fullName>
        <ecNumber>7.1.1.2</ecNumber>
    </recommendedName>
    <alternativeName>
        <fullName>NADH dehydrogenase subunit 3</fullName>
    </alternativeName>
</protein>
<feature type="chain" id="PRO_0000355052" description="NADH-ubiquinone oxidoreductase chain 3">
    <location>
        <begin position="1"/>
        <end position="128"/>
    </location>
</feature>
<feature type="transmembrane region" description="Helical" evidence="2">
    <location>
        <begin position="3"/>
        <end position="23"/>
    </location>
</feature>
<feature type="transmembrane region" description="Helical" evidence="2">
    <location>
        <begin position="52"/>
        <end position="72"/>
    </location>
</feature>
<feature type="transmembrane region" description="Helical" evidence="2">
    <location>
        <begin position="84"/>
        <end position="104"/>
    </location>
</feature>
<dbReference type="EC" id="7.1.1.2"/>
<dbReference type="EMBL" id="DQ508940">
    <property type="protein sequence ID" value="ABF58066.1"/>
    <property type="molecule type" value="Genomic_DNA"/>
</dbReference>
<dbReference type="RefSeq" id="YP_001621417.1">
    <property type="nucleotide sequence ID" value="NC_010166.1"/>
</dbReference>
<dbReference type="SMR" id="A9RAG5"/>
<dbReference type="STRING" id="284592.A9RAG5"/>
<dbReference type="GeneID" id="5845851"/>
<dbReference type="KEGG" id="dha:ND3"/>
<dbReference type="InParanoid" id="A9RAG5"/>
<dbReference type="Proteomes" id="UP000000599">
    <property type="component" value="Mitochondrion"/>
</dbReference>
<dbReference type="GO" id="GO:0031966">
    <property type="term" value="C:mitochondrial membrane"/>
    <property type="evidence" value="ECO:0007669"/>
    <property type="project" value="UniProtKB-SubCell"/>
</dbReference>
<dbReference type="GO" id="GO:0030964">
    <property type="term" value="C:NADH dehydrogenase complex"/>
    <property type="evidence" value="ECO:0007669"/>
    <property type="project" value="TreeGrafter"/>
</dbReference>
<dbReference type="GO" id="GO:0008137">
    <property type="term" value="F:NADH dehydrogenase (ubiquinone) activity"/>
    <property type="evidence" value="ECO:0007669"/>
    <property type="project" value="UniProtKB-EC"/>
</dbReference>
<dbReference type="Gene3D" id="1.20.58.1610">
    <property type="entry name" value="NADH:ubiquinone/plastoquinone oxidoreductase, chain 3"/>
    <property type="match status" value="1"/>
</dbReference>
<dbReference type="InterPro" id="IPR000440">
    <property type="entry name" value="NADH_UbQ/plastoQ_OxRdtase_su3"/>
</dbReference>
<dbReference type="InterPro" id="IPR038430">
    <property type="entry name" value="NDAH_ubi_oxred_su3_sf"/>
</dbReference>
<dbReference type="PANTHER" id="PTHR11058">
    <property type="entry name" value="NADH-UBIQUINONE OXIDOREDUCTASE CHAIN 3"/>
    <property type="match status" value="1"/>
</dbReference>
<dbReference type="PANTHER" id="PTHR11058:SF9">
    <property type="entry name" value="NADH-UBIQUINONE OXIDOREDUCTASE CHAIN 3"/>
    <property type="match status" value="1"/>
</dbReference>
<dbReference type="Pfam" id="PF00507">
    <property type="entry name" value="Oxidored_q4"/>
    <property type="match status" value="1"/>
</dbReference>
<gene>
    <name type="primary">ND3</name>
    <name type="synonym">NAD3</name>
</gene>
<geneLocation type="mitochondrion"/>
<proteinExistence type="inferred from homology"/>
<evidence type="ECO:0000250" key="1"/>
<evidence type="ECO:0000255" key="2"/>
<evidence type="ECO:0000305" key="3"/>
<name>NU3M_DEBHA</name>
<organism>
    <name type="scientific">Debaryomyces hansenii (strain ATCC 36239 / CBS 767 / BCRC 21394 / JCM 1990 / NBRC 0083 / IGC 2968)</name>
    <name type="common">Yeast</name>
    <name type="synonym">Torulaspora hansenii</name>
    <dbReference type="NCBI Taxonomy" id="284592"/>
    <lineage>
        <taxon>Eukaryota</taxon>
        <taxon>Fungi</taxon>
        <taxon>Dikarya</taxon>
        <taxon>Ascomycota</taxon>
        <taxon>Saccharomycotina</taxon>
        <taxon>Pichiomycetes</taxon>
        <taxon>Debaryomycetaceae</taxon>
        <taxon>Debaryomyces</taxon>
    </lineage>
</organism>
<accession>A9RAG5</accession>
<sequence length="128" mass="14475">MFTIYTYLAPIVAMVLVVLNYLISNNNSYIEKDGPFECGFTSYQQTRSAFSVAFILVAILFLPFDLEMSSILPYVVSAYSNGTYGLSILVIFLLSLVIAFVYEINLGALNLERRYTPIVKPLMNKLYL</sequence>
<keyword id="KW-0249">Electron transport</keyword>
<keyword id="KW-0472">Membrane</keyword>
<keyword id="KW-0496">Mitochondrion</keyword>
<keyword id="KW-0520">NAD</keyword>
<keyword id="KW-1185">Reference proteome</keyword>
<keyword id="KW-0679">Respiratory chain</keyword>
<keyword id="KW-1278">Translocase</keyword>
<keyword id="KW-0812">Transmembrane</keyword>
<keyword id="KW-1133">Transmembrane helix</keyword>
<keyword id="KW-0813">Transport</keyword>
<keyword id="KW-0830">Ubiquinone</keyword>